<evidence type="ECO:0000255" key="1">
    <source>
        <dbReference type="HAMAP-Rule" id="MF_01331"/>
    </source>
</evidence>
<evidence type="ECO:0000305" key="2"/>
<feature type="chain" id="PRO_0000125189" description="Large ribosomal subunit protein uL22">
    <location>
        <begin position="1"/>
        <end position="109"/>
    </location>
</feature>
<comment type="function">
    <text evidence="1">This protein binds specifically to 23S rRNA; its binding is stimulated by other ribosomal proteins, e.g. L4, L17, and L20. It is important during the early stages of 50S assembly. It makes multiple contacts with different domains of the 23S rRNA in the assembled 50S subunit and ribosome (By similarity).</text>
</comment>
<comment type="function">
    <text evidence="1">The globular domain of the protein is located near the polypeptide exit tunnel on the outside of the subunit, while an extended beta-hairpin is found that lines the wall of the exit tunnel in the center of the 70S ribosome.</text>
</comment>
<comment type="subunit">
    <text evidence="1">Part of the 50S ribosomal subunit.</text>
</comment>
<comment type="miscellaneous">
    <text>Present in outer membrane vesicle formulations which are used as vaccines in human.</text>
</comment>
<comment type="similarity">
    <text evidence="1">Belongs to the universal ribosomal protein uL22 family.</text>
</comment>
<organism>
    <name type="scientific">Neisseria meningitidis serogroup B (strain ATCC BAA-335 / MC58)</name>
    <dbReference type="NCBI Taxonomy" id="122586"/>
    <lineage>
        <taxon>Bacteria</taxon>
        <taxon>Pseudomonadati</taxon>
        <taxon>Pseudomonadota</taxon>
        <taxon>Betaproteobacteria</taxon>
        <taxon>Neisseriales</taxon>
        <taxon>Neisseriaceae</taxon>
        <taxon>Neisseria</taxon>
    </lineage>
</organism>
<proteinExistence type="evidence at protein level"/>
<keyword id="KW-1185">Reference proteome</keyword>
<keyword id="KW-0687">Ribonucleoprotein</keyword>
<keyword id="KW-0689">Ribosomal protein</keyword>
<keyword id="KW-0694">RNA-binding</keyword>
<keyword id="KW-0699">rRNA-binding</keyword>
<gene>
    <name evidence="1" type="primary">rplV</name>
    <name type="ordered locus">NMB0147</name>
</gene>
<accession>Q7DDT5</accession>
<sequence length="109" mass="11909">MRVNAQHKNARISAQKARLVADLIRGKDVAQALNILAFSPKKGAELIKKVLESAIANAEHNNGADIDELKVVTIFVDKGPSLKRFQARAKGRGNRIEKQTCHINVTVGN</sequence>
<name>RL22_NEIMB</name>
<reference key="1">
    <citation type="journal article" date="2000" name="Science">
        <title>Complete genome sequence of Neisseria meningitidis serogroup B strain MC58.</title>
        <authorList>
            <person name="Tettelin H."/>
            <person name="Saunders N.J."/>
            <person name="Heidelberg J.F."/>
            <person name="Jeffries A.C."/>
            <person name="Nelson K.E."/>
            <person name="Eisen J.A."/>
            <person name="Ketchum K.A."/>
            <person name="Hood D.W."/>
            <person name="Peden J.F."/>
            <person name="Dodson R.J."/>
            <person name="Nelson W.C."/>
            <person name="Gwinn M.L."/>
            <person name="DeBoy R.T."/>
            <person name="Peterson J.D."/>
            <person name="Hickey E.K."/>
            <person name="Haft D.H."/>
            <person name="Salzberg S.L."/>
            <person name="White O."/>
            <person name="Fleischmann R.D."/>
            <person name="Dougherty B.A."/>
            <person name="Mason T.M."/>
            <person name="Ciecko A."/>
            <person name="Parksey D.S."/>
            <person name="Blair E."/>
            <person name="Cittone H."/>
            <person name="Clark E.B."/>
            <person name="Cotton M.D."/>
            <person name="Utterback T.R."/>
            <person name="Khouri H.M."/>
            <person name="Qin H."/>
            <person name="Vamathevan J.J."/>
            <person name="Gill J."/>
            <person name="Scarlato V."/>
            <person name="Masignani V."/>
            <person name="Pizza M."/>
            <person name="Grandi G."/>
            <person name="Sun L."/>
            <person name="Smith H.O."/>
            <person name="Fraser C.M."/>
            <person name="Moxon E.R."/>
            <person name="Rappuoli R."/>
            <person name="Venter J.C."/>
        </authorList>
    </citation>
    <scope>NUCLEOTIDE SEQUENCE [LARGE SCALE GENOMIC DNA]</scope>
    <source>
        <strain>ATCC BAA-335 / MC58</strain>
    </source>
</reference>
<reference key="2">
    <citation type="journal article" date="2005" name="Hum. Vaccin.">
        <title>Characterization of the protein content of a meningococcal outer membrane vesicle vaccine by polyacrylamide gel electrophoresis and mass spectrometry.</title>
        <authorList>
            <person name="Vipond C."/>
            <person name="Wheeler J.X."/>
            <person name="Jones C."/>
            <person name="Feavers I.M."/>
            <person name="Suker J."/>
        </authorList>
    </citation>
    <scope>IDENTIFICATION BY MASS SPECTROMETRY [LARGE SCALE ANALYSIS]</scope>
</reference>
<protein>
    <recommendedName>
        <fullName evidence="1">Large ribosomal subunit protein uL22</fullName>
    </recommendedName>
    <alternativeName>
        <fullName evidence="2">50S ribosomal protein L22</fullName>
    </alternativeName>
</protein>
<dbReference type="EMBL" id="AE002098">
    <property type="protein sequence ID" value="AAF40605.1"/>
    <property type="molecule type" value="Genomic_DNA"/>
</dbReference>
<dbReference type="RefSeq" id="NP_273205.1">
    <property type="nucleotide sequence ID" value="NC_003112.2"/>
</dbReference>
<dbReference type="RefSeq" id="WP_002215424.1">
    <property type="nucleotide sequence ID" value="NC_003112.2"/>
</dbReference>
<dbReference type="SMR" id="Q7DDT5"/>
<dbReference type="FunCoup" id="Q7DDT5">
    <property type="interactions" value="532"/>
</dbReference>
<dbReference type="STRING" id="122586.NMB0147"/>
<dbReference type="PaxDb" id="122586-NMB0147"/>
<dbReference type="GeneID" id="93387222"/>
<dbReference type="KEGG" id="nme:NMB0147"/>
<dbReference type="PATRIC" id="fig|122586.8.peg.188"/>
<dbReference type="HOGENOM" id="CLU_083987_3_3_4"/>
<dbReference type="InParanoid" id="Q7DDT5"/>
<dbReference type="OrthoDB" id="9805969at2"/>
<dbReference type="Proteomes" id="UP000000425">
    <property type="component" value="Chromosome"/>
</dbReference>
<dbReference type="GO" id="GO:0022625">
    <property type="term" value="C:cytosolic large ribosomal subunit"/>
    <property type="evidence" value="ECO:0000318"/>
    <property type="project" value="GO_Central"/>
</dbReference>
<dbReference type="GO" id="GO:0019843">
    <property type="term" value="F:rRNA binding"/>
    <property type="evidence" value="ECO:0007669"/>
    <property type="project" value="UniProtKB-UniRule"/>
</dbReference>
<dbReference type="GO" id="GO:0003735">
    <property type="term" value="F:structural constituent of ribosome"/>
    <property type="evidence" value="ECO:0000318"/>
    <property type="project" value="GO_Central"/>
</dbReference>
<dbReference type="GO" id="GO:0006412">
    <property type="term" value="P:translation"/>
    <property type="evidence" value="ECO:0000318"/>
    <property type="project" value="GO_Central"/>
</dbReference>
<dbReference type="CDD" id="cd00336">
    <property type="entry name" value="Ribosomal_L22"/>
    <property type="match status" value="1"/>
</dbReference>
<dbReference type="FunFam" id="3.90.470.10:FF:000001">
    <property type="entry name" value="50S ribosomal protein L22"/>
    <property type="match status" value="1"/>
</dbReference>
<dbReference type="Gene3D" id="3.90.470.10">
    <property type="entry name" value="Ribosomal protein L22/L17"/>
    <property type="match status" value="1"/>
</dbReference>
<dbReference type="HAMAP" id="MF_01331_B">
    <property type="entry name" value="Ribosomal_uL22_B"/>
    <property type="match status" value="1"/>
</dbReference>
<dbReference type="InterPro" id="IPR001063">
    <property type="entry name" value="Ribosomal_uL22"/>
</dbReference>
<dbReference type="InterPro" id="IPR005727">
    <property type="entry name" value="Ribosomal_uL22_bac/chlpt-type"/>
</dbReference>
<dbReference type="InterPro" id="IPR047867">
    <property type="entry name" value="Ribosomal_uL22_bac/org-type"/>
</dbReference>
<dbReference type="InterPro" id="IPR018260">
    <property type="entry name" value="Ribosomal_uL22_CS"/>
</dbReference>
<dbReference type="InterPro" id="IPR036394">
    <property type="entry name" value="Ribosomal_uL22_sf"/>
</dbReference>
<dbReference type="NCBIfam" id="TIGR01044">
    <property type="entry name" value="rplV_bact"/>
    <property type="match status" value="1"/>
</dbReference>
<dbReference type="PANTHER" id="PTHR13501">
    <property type="entry name" value="CHLOROPLAST 50S RIBOSOMAL PROTEIN L22-RELATED"/>
    <property type="match status" value="1"/>
</dbReference>
<dbReference type="PANTHER" id="PTHR13501:SF8">
    <property type="entry name" value="LARGE RIBOSOMAL SUBUNIT PROTEIN UL22M"/>
    <property type="match status" value="1"/>
</dbReference>
<dbReference type="Pfam" id="PF00237">
    <property type="entry name" value="Ribosomal_L22"/>
    <property type="match status" value="1"/>
</dbReference>
<dbReference type="SUPFAM" id="SSF54843">
    <property type="entry name" value="Ribosomal protein L22"/>
    <property type="match status" value="1"/>
</dbReference>
<dbReference type="PROSITE" id="PS00464">
    <property type="entry name" value="RIBOSOMAL_L22"/>
    <property type="match status" value="1"/>
</dbReference>